<feature type="chain" id="PRO_0000075008" description="N5-carboxyaminoimidazole ribonucleotide synthase">
    <location>
        <begin position="1"/>
        <end position="374"/>
    </location>
</feature>
<feature type="domain" description="ATP-grasp" evidence="1">
    <location>
        <begin position="112"/>
        <end position="296"/>
    </location>
</feature>
<feature type="binding site" evidence="1">
    <location>
        <position position="108"/>
    </location>
    <ligand>
        <name>ATP</name>
        <dbReference type="ChEBI" id="CHEBI:30616"/>
    </ligand>
</feature>
<feature type="binding site" evidence="1">
    <location>
        <position position="148"/>
    </location>
    <ligand>
        <name>ATP</name>
        <dbReference type="ChEBI" id="CHEBI:30616"/>
    </ligand>
</feature>
<feature type="binding site" evidence="1">
    <location>
        <begin position="153"/>
        <end position="159"/>
    </location>
    <ligand>
        <name>ATP</name>
        <dbReference type="ChEBI" id="CHEBI:30616"/>
    </ligand>
</feature>
<feature type="binding site" evidence="1">
    <location>
        <begin position="183"/>
        <end position="186"/>
    </location>
    <ligand>
        <name>ATP</name>
        <dbReference type="ChEBI" id="CHEBI:30616"/>
    </ligand>
</feature>
<feature type="binding site" evidence="1">
    <location>
        <position position="191"/>
    </location>
    <ligand>
        <name>ATP</name>
        <dbReference type="ChEBI" id="CHEBI:30616"/>
    </ligand>
</feature>
<feature type="binding site" evidence="1">
    <location>
        <position position="214"/>
    </location>
    <ligand>
        <name>ATP</name>
        <dbReference type="ChEBI" id="CHEBI:30616"/>
    </ligand>
</feature>
<feature type="binding site" evidence="1">
    <location>
        <begin position="266"/>
        <end position="267"/>
    </location>
    <ligand>
        <name>ATP</name>
        <dbReference type="ChEBI" id="CHEBI:30616"/>
    </ligand>
</feature>
<gene>
    <name evidence="1" type="primary">purK</name>
    <name type="ordered locus">MW0948</name>
</gene>
<name>PURK_STAAW</name>
<keyword id="KW-0067">ATP-binding</keyword>
<keyword id="KW-0436">Ligase</keyword>
<keyword id="KW-0547">Nucleotide-binding</keyword>
<keyword id="KW-0658">Purine biosynthesis</keyword>
<proteinExistence type="inferred from homology"/>
<evidence type="ECO:0000255" key="1">
    <source>
        <dbReference type="HAMAP-Rule" id="MF_01928"/>
    </source>
</evidence>
<protein>
    <recommendedName>
        <fullName evidence="1">N5-carboxyaminoimidazole ribonucleotide synthase</fullName>
        <shortName evidence="1">N5-CAIR synthase</shortName>
        <ecNumber evidence="1">6.3.4.18</ecNumber>
    </recommendedName>
    <alternativeName>
        <fullName evidence="1">5-(carboxyamino)imidazole ribonucleotide synthetase</fullName>
    </alternativeName>
</protein>
<comment type="function">
    <text evidence="1">Catalyzes the ATP-dependent conversion of 5-aminoimidazole ribonucleotide (AIR) and HCO(3)(-) to N5-carboxyaminoimidazole ribonucleotide (N5-CAIR).</text>
</comment>
<comment type="catalytic activity">
    <reaction evidence="1">
        <text>5-amino-1-(5-phospho-beta-D-ribosyl)imidazole + hydrogencarbonate + ATP = 5-carboxyamino-1-(5-phospho-D-ribosyl)imidazole + ADP + phosphate + 2 H(+)</text>
        <dbReference type="Rhea" id="RHEA:19317"/>
        <dbReference type="ChEBI" id="CHEBI:15378"/>
        <dbReference type="ChEBI" id="CHEBI:17544"/>
        <dbReference type="ChEBI" id="CHEBI:30616"/>
        <dbReference type="ChEBI" id="CHEBI:43474"/>
        <dbReference type="ChEBI" id="CHEBI:58730"/>
        <dbReference type="ChEBI" id="CHEBI:137981"/>
        <dbReference type="ChEBI" id="CHEBI:456216"/>
        <dbReference type="EC" id="6.3.4.18"/>
    </reaction>
</comment>
<comment type="pathway">
    <text evidence="1">Purine metabolism; IMP biosynthesis via de novo pathway; 5-amino-1-(5-phospho-D-ribosyl)imidazole-4-carboxylate from 5-amino-1-(5-phospho-D-ribosyl)imidazole (N5-CAIR route): step 1/2.</text>
</comment>
<comment type="subunit">
    <text evidence="1">Homodimer.</text>
</comment>
<comment type="similarity">
    <text evidence="1">Belongs to the PurK/PurT family.</text>
</comment>
<reference key="1">
    <citation type="journal article" date="2002" name="Lancet">
        <title>Genome and virulence determinants of high virulence community-acquired MRSA.</title>
        <authorList>
            <person name="Baba T."/>
            <person name="Takeuchi F."/>
            <person name="Kuroda M."/>
            <person name="Yuzawa H."/>
            <person name="Aoki K."/>
            <person name="Oguchi A."/>
            <person name="Nagai Y."/>
            <person name="Iwama N."/>
            <person name="Asano K."/>
            <person name="Naimi T."/>
            <person name="Kuroda H."/>
            <person name="Cui L."/>
            <person name="Yamamoto K."/>
            <person name="Hiramatsu K."/>
        </authorList>
    </citation>
    <scope>NUCLEOTIDE SEQUENCE [LARGE SCALE GENOMIC DNA]</scope>
    <source>
        <strain>MW2</strain>
    </source>
</reference>
<accession>Q8NX94</accession>
<dbReference type="EC" id="6.3.4.18" evidence="1"/>
<dbReference type="EMBL" id="BA000033">
    <property type="protein sequence ID" value="BAB94813.1"/>
    <property type="molecule type" value="Genomic_DNA"/>
</dbReference>
<dbReference type="RefSeq" id="WP_000009495.1">
    <property type="nucleotide sequence ID" value="NC_003923.1"/>
</dbReference>
<dbReference type="SMR" id="Q8NX94"/>
<dbReference type="KEGG" id="sam:MW0948"/>
<dbReference type="HOGENOM" id="CLU_011534_0_1_9"/>
<dbReference type="UniPathway" id="UPA00074">
    <property type="reaction ID" value="UER00942"/>
</dbReference>
<dbReference type="GO" id="GO:0005829">
    <property type="term" value="C:cytosol"/>
    <property type="evidence" value="ECO:0007669"/>
    <property type="project" value="TreeGrafter"/>
</dbReference>
<dbReference type="GO" id="GO:0034028">
    <property type="term" value="F:5-(carboxyamino)imidazole ribonucleotide synthase activity"/>
    <property type="evidence" value="ECO:0007669"/>
    <property type="project" value="UniProtKB-UniRule"/>
</dbReference>
<dbReference type="GO" id="GO:0005524">
    <property type="term" value="F:ATP binding"/>
    <property type="evidence" value="ECO:0007669"/>
    <property type="project" value="UniProtKB-KW"/>
</dbReference>
<dbReference type="GO" id="GO:0046872">
    <property type="term" value="F:metal ion binding"/>
    <property type="evidence" value="ECO:0007669"/>
    <property type="project" value="InterPro"/>
</dbReference>
<dbReference type="GO" id="GO:0004638">
    <property type="term" value="F:phosphoribosylaminoimidazole carboxylase activity"/>
    <property type="evidence" value="ECO:0007669"/>
    <property type="project" value="InterPro"/>
</dbReference>
<dbReference type="GO" id="GO:0006189">
    <property type="term" value="P:'de novo' IMP biosynthetic process"/>
    <property type="evidence" value="ECO:0007669"/>
    <property type="project" value="UniProtKB-UniRule"/>
</dbReference>
<dbReference type="FunFam" id="3.30.1490.20:FF:000015">
    <property type="entry name" value="N5-carboxyaminoimidazole ribonucleotide synthase"/>
    <property type="match status" value="1"/>
</dbReference>
<dbReference type="FunFam" id="3.40.50.20:FF:000016">
    <property type="entry name" value="N5-carboxyaminoimidazole ribonucleotide synthase"/>
    <property type="match status" value="1"/>
</dbReference>
<dbReference type="Gene3D" id="3.40.50.20">
    <property type="match status" value="1"/>
</dbReference>
<dbReference type="Gene3D" id="3.30.1490.20">
    <property type="entry name" value="ATP-grasp fold, A domain"/>
    <property type="match status" value="1"/>
</dbReference>
<dbReference type="Gene3D" id="3.30.470.20">
    <property type="entry name" value="ATP-grasp fold, B domain"/>
    <property type="match status" value="1"/>
</dbReference>
<dbReference type="HAMAP" id="MF_01928">
    <property type="entry name" value="PurK"/>
    <property type="match status" value="1"/>
</dbReference>
<dbReference type="InterPro" id="IPR011761">
    <property type="entry name" value="ATP-grasp"/>
</dbReference>
<dbReference type="InterPro" id="IPR003135">
    <property type="entry name" value="ATP-grasp_carboxylate-amine"/>
</dbReference>
<dbReference type="InterPro" id="IPR013815">
    <property type="entry name" value="ATP_grasp_subdomain_1"/>
</dbReference>
<dbReference type="InterPro" id="IPR016185">
    <property type="entry name" value="PreATP-grasp_dom_sf"/>
</dbReference>
<dbReference type="InterPro" id="IPR005875">
    <property type="entry name" value="PurK"/>
</dbReference>
<dbReference type="InterPro" id="IPR040686">
    <property type="entry name" value="PurK_C"/>
</dbReference>
<dbReference type="InterPro" id="IPR054350">
    <property type="entry name" value="PurT/PurK_preATP-grasp"/>
</dbReference>
<dbReference type="InterPro" id="IPR011054">
    <property type="entry name" value="Rudment_hybrid_motif"/>
</dbReference>
<dbReference type="NCBIfam" id="NF004675">
    <property type="entry name" value="PRK06019.1-1"/>
    <property type="match status" value="1"/>
</dbReference>
<dbReference type="NCBIfam" id="NF004676">
    <property type="entry name" value="PRK06019.1-2"/>
    <property type="match status" value="1"/>
</dbReference>
<dbReference type="NCBIfam" id="NF004679">
    <property type="entry name" value="PRK06019.1-5"/>
    <property type="match status" value="1"/>
</dbReference>
<dbReference type="NCBIfam" id="TIGR01161">
    <property type="entry name" value="purK"/>
    <property type="match status" value="1"/>
</dbReference>
<dbReference type="PANTHER" id="PTHR11609:SF5">
    <property type="entry name" value="PHOSPHORIBOSYLAMINOIMIDAZOLE CARBOXYLASE"/>
    <property type="match status" value="1"/>
</dbReference>
<dbReference type="PANTHER" id="PTHR11609">
    <property type="entry name" value="PURINE BIOSYNTHESIS PROTEIN 6/7, PUR6/7"/>
    <property type="match status" value="1"/>
</dbReference>
<dbReference type="Pfam" id="PF02222">
    <property type="entry name" value="ATP-grasp"/>
    <property type="match status" value="1"/>
</dbReference>
<dbReference type="Pfam" id="PF17769">
    <property type="entry name" value="PurK_C"/>
    <property type="match status" value="1"/>
</dbReference>
<dbReference type="Pfam" id="PF22660">
    <property type="entry name" value="RS_preATP-grasp-like"/>
    <property type="match status" value="1"/>
</dbReference>
<dbReference type="SUPFAM" id="SSF56059">
    <property type="entry name" value="Glutathione synthetase ATP-binding domain-like"/>
    <property type="match status" value="1"/>
</dbReference>
<dbReference type="SUPFAM" id="SSF52440">
    <property type="entry name" value="PreATP-grasp domain"/>
    <property type="match status" value="1"/>
</dbReference>
<dbReference type="SUPFAM" id="SSF51246">
    <property type="entry name" value="Rudiment single hybrid motif"/>
    <property type="match status" value="1"/>
</dbReference>
<dbReference type="PROSITE" id="PS50975">
    <property type="entry name" value="ATP_GRASP"/>
    <property type="match status" value="1"/>
</dbReference>
<sequence length="374" mass="42466">MSFNKLKFGATIGIIGGGQLGKMMAQSAQKMGYKVVVLDPSEDCPCRYVAHEFIQAKYDDEKALNQLGQKCDVITYEFENISAQQLKLLCEKYNIPQGYQAIQLLQDRLTEKETLKSAGTKVVPFISVKESTDIDKAIETLGYPFIVKTRFGGYDGKGQVLINNEKDLQEGFKLIETSECVAEKYLNIKKEVSLTVTRGNNNQITFFPLQENEHRNQILFKTIVPARIDKTAEAKEQVNKIIQSIHFIGTFTVEFFIDSNNQLYVNEIAPRPHNSGHYSIEACDYSQFDTHILAVTGQSLPNSIELLKPAVMMNLLGKDLDLLENEFNEHPEWHLHIYGKSERKDSRKMGHMTVLTNDVNQTEQDMYAKFEGSN</sequence>
<organism>
    <name type="scientific">Staphylococcus aureus (strain MW2)</name>
    <dbReference type="NCBI Taxonomy" id="196620"/>
    <lineage>
        <taxon>Bacteria</taxon>
        <taxon>Bacillati</taxon>
        <taxon>Bacillota</taxon>
        <taxon>Bacilli</taxon>
        <taxon>Bacillales</taxon>
        <taxon>Staphylococcaceae</taxon>
        <taxon>Staphylococcus</taxon>
    </lineage>
</organism>